<organism>
    <name type="scientific">Gallus gallus</name>
    <name type="common">Chicken</name>
    <dbReference type="NCBI Taxonomy" id="9031"/>
    <lineage>
        <taxon>Eukaryota</taxon>
        <taxon>Metazoa</taxon>
        <taxon>Chordata</taxon>
        <taxon>Craniata</taxon>
        <taxon>Vertebrata</taxon>
        <taxon>Euteleostomi</taxon>
        <taxon>Archelosauria</taxon>
        <taxon>Archosauria</taxon>
        <taxon>Dinosauria</taxon>
        <taxon>Saurischia</taxon>
        <taxon>Theropoda</taxon>
        <taxon>Coelurosauria</taxon>
        <taxon>Aves</taxon>
        <taxon>Neognathae</taxon>
        <taxon>Galloanserae</taxon>
        <taxon>Galliformes</taxon>
        <taxon>Phasianidae</taxon>
        <taxon>Phasianinae</taxon>
        <taxon>Gallus</taxon>
    </lineage>
</organism>
<evidence type="ECO:0000250" key="1"/>
<evidence type="ECO:0000255" key="2">
    <source>
        <dbReference type="PROSITE-ProRule" id="PRU00028"/>
    </source>
</evidence>
<evidence type="ECO:0000256" key="3">
    <source>
        <dbReference type="SAM" id="MobiDB-lite"/>
    </source>
</evidence>
<evidence type="ECO:0000305" key="4"/>
<keyword id="KW-0273">Eye lens protein</keyword>
<keyword id="KW-1185">Reference proteome</keyword>
<keyword id="KW-0677">Repeat</keyword>
<feature type="chain" id="PRO_0000057563" description="Beta-crystallin B3">
    <location>
        <begin position="1"/>
        <end position="211"/>
    </location>
</feature>
<feature type="domain" description="Beta/gamma crystallin 'Greek key' 1" evidence="2">
    <location>
        <begin position="24"/>
        <end position="63"/>
    </location>
</feature>
<feature type="domain" description="Beta/gamma crystallin 'Greek key' 2" evidence="2">
    <location>
        <begin position="64"/>
        <end position="108"/>
    </location>
</feature>
<feature type="domain" description="Beta/gamma crystallin 'Greek key' 3" evidence="2">
    <location>
        <begin position="114"/>
        <end position="155"/>
    </location>
</feature>
<feature type="domain" description="Beta/gamma crystallin 'Greek key' 4" evidence="2">
    <location>
        <begin position="156"/>
        <end position="198"/>
    </location>
</feature>
<feature type="region of interest" description="N-terminal arm">
    <location>
        <begin position="1"/>
        <end position="23"/>
    </location>
</feature>
<feature type="region of interest" description="Disordered" evidence="3">
    <location>
        <begin position="1"/>
        <end position="21"/>
    </location>
</feature>
<feature type="region of interest" description="Connecting peptide">
    <location>
        <begin position="109"/>
        <end position="113"/>
    </location>
</feature>
<feature type="region of interest" description="C-terminal arm">
    <location>
        <begin position="200"/>
        <end position="211"/>
    </location>
</feature>
<comment type="function">
    <text>Crystallins are the dominant structural components of the vertebrate eye lens.</text>
</comment>
<comment type="subunit">
    <text evidence="1">Homo/heterodimer, or complexes of higher-order. The structure of beta-crystallin oligomers seems to be stabilized through interactions between the N-terminal arms (By similarity).</text>
</comment>
<comment type="domain">
    <text>Has a two-domain beta-structure, folded into four very similar Greek key motifs.</text>
</comment>
<comment type="similarity">
    <text evidence="4">Belongs to the beta/gamma-crystallin family.</text>
</comment>
<accession>P55165</accession>
<proteinExistence type="evidence at transcript level"/>
<name>CRBB3_CHICK</name>
<dbReference type="EMBL" id="U28146">
    <property type="protein sequence ID" value="AAB08775.2"/>
    <property type="molecule type" value="mRNA"/>
</dbReference>
<dbReference type="RefSeq" id="NP_990522.1">
    <property type="nucleotide sequence ID" value="NM_205191.1"/>
</dbReference>
<dbReference type="SMR" id="P55165"/>
<dbReference type="FunCoup" id="P55165">
    <property type="interactions" value="6"/>
</dbReference>
<dbReference type="STRING" id="9031.ENSGALP00000037858"/>
<dbReference type="PaxDb" id="9031-ENSGALP00000037858"/>
<dbReference type="Ensembl" id="ENSGALT00010051309.1">
    <property type="protein sequence ID" value="ENSGALP00010030500.1"/>
    <property type="gene ID" value="ENSGALG00010021174.1"/>
</dbReference>
<dbReference type="GeneID" id="396108"/>
<dbReference type="KEGG" id="gga:396108"/>
<dbReference type="CTD" id="1417"/>
<dbReference type="VEuPathDB" id="HostDB:geneid_396108"/>
<dbReference type="eggNOG" id="ENOG502QTNZ">
    <property type="taxonomic scope" value="Eukaryota"/>
</dbReference>
<dbReference type="GeneTree" id="ENSGT00940000158425"/>
<dbReference type="HOGENOM" id="CLU_081883_0_1_1"/>
<dbReference type="InParanoid" id="P55165"/>
<dbReference type="OMA" id="RIRDRKW"/>
<dbReference type="OrthoDB" id="8701124at2759"/>
<dbReference type="PhylomeDB" id="P55165"/>
<dbReference type="PRO" id="PR:P55165"/>
<dbReference type="Proteomes" id="UP000000539">
    <property type="component" value="Chromosome 15"/>
</dbReference>
<dbReference type="Bgee" id="ENSGALG00000005515">
    <property type="expression patterns" value="Expressed in lung and 6 other cell types or tissues"/>
</dbReference>
<dbReference type="GO" id="GO:0005212">
    <property type="term" value="F:structural constituent of eye lens"/>
    <property type="evidence" value="ECO:0000318"/>
    <property type="project" value="GO_Central"/>
</dbReference>
<dbReference type="GO" id="GO:0002088">
    <property type="term" value="P:lens development in camera-type eye"/>
    <property type="evidence" value="ECO:0000318"/>
    <property type="project" value="GO_Central"/>
</dbReference>
<dbReference type="GO" id="GO:0007601">
    <property type="term" value="P:visual perception"/>
    <property type="evidence" value="ECO:0000318"/>
    <property type="project" value="GO_Central"/>
</dbReference>
<dbReference type="FunFam" id="2.60.20.10:FF:000005">
    <property type="entry name" value="Crystallin, beta B1"/>
    <property type="match status" value="1"/>
</dbReference>
<dbReference type="FunFam" id="2.60.20.10:FF:000002">
    <property type="entry name" value="Crystallin, beta B2"/>
    <property type="match status" value="1"/>
</dbReference>
<dbReference type="Gene3D" id="2.60.20.10">
    <property type="entry name" value="Crystallins"/>
    <property type="match status" value="2"/>
</dbReference>
<dbReference type="InterPro" id="IPR050252">
    <property type="entry name" value="Beta/Gamma-Crystallin"/>
</dbReference>
<dbReference type="InterPro" id="IPR001064">
    <property type="entry name" value="Beta/gamma_crystallin"/>
</dbReference>
<dbReference type="InterPro" id="IPR011024">
    <property type="entry name" value="G_crystallin-like"/>
</dbReference>
<dbReference type="PANTHER" id="PTHR11818:SF13">
    <property type="entry name" value="BETA-CRYSTALLIN B3"/>
    <property type="match status" value="1"/>
</dbReference>
<dbReference type="PANTHER" id="PTHR11818">
    <property type="entry name" value="BETA/GAMMA CRYSTALLIN"/>
    <property type="match status" value="1"/>
</dbReference>
<dbReference type="Pfam" id="PF00030">
    <property type="entry name" value="Crystall"/>
    <property type="match status" value="2"/>
</dbReference>
<dbReference type="PRINTS" id="PR01367">
    <property type="entry name" value="BGCRYSTALLIN"/>
</dbReference>
<dbReference type="SMART" id="SM00247">
    <property type="entry name" value="XTALbg"/>
    <property type="match status" value="2"/>
</dbReference>
<dbReference type="SUPFAM" id="SSF49695">
    <property type="entry name" value="gamma-Crystallin-like"/>
    <property type="match status" value="1"/>
</dbReference>
<dbReference type="PROSITE" id="PS50915">
    <property type="entry name" value="CRYSTALLIN_BETA_GAMMA"/>
    <property type="match status" value="4"/>
</dbReference>
<reference key="1">
    <citation type="journal article" date="1996" name="Exp. Eye Res.">
        <title>Sequence and expression of chicken beta A2- and beta B3-crystallins.</title>
        <authorList>
            <person name="Duncan M.K."/>
            <person name="Banerjee-Basu S."/>
            <person name="McDermott J.B."/>
            <person name="Piatigorsky J."/>
        </authorList>
    </citation>
    <scope>NUCLEOTIDE SEQUENCE [MRNA]</scope>
    <source>
        <strain>White leghorn</strain>
        <tissue>Lens</tissue>
    </source>
</reference>
<reference key="2">
    <citation type="submission" date="2004-02" db="EMBL/GenBank/DDBJ databases">
        <authorList>
            <person name="Duncan M.K."/>
        </authorList>
    </citation>
    <scope>SEQUENCE REVISION TO 17-20; 44; 141 AND 166</scope>
</reference>
<protein>
    <recommendedName>
        <fullName>Beta-crystallin B3</fullName>
    </recommendedName>
    <alternativeName>
        <fullName>Beta-B3 crystallin</fullName>
    </alternativeName>
</protein>
<sequence length="211" mass="24450">MTEQQSPPEQMVTGEGAGERGGNYKITIYELENFQGRRCELSEELPNVVDKALEKVGSIQVESGPWLGFERQAFAGEQFVLEKGDYPRWDSWSNSHNSDSLMSLRPLQIDSPDHKIHLFENAGYTGRKMEIVDDDVPSLWAHGFQDRVASVRALNGTWVGYEYPGYRGRQHVFEKGEYRHWNEWDANQPLMQSVRRVRDQQWHQRGSFENS</sequence>
<gene>
    <name type="primary">CRYBB3</name>
</gene>